<evidence type="ECO:0000255" key="1">
    <source>
        <dbReference type="HAMAP-Rule" id="MF_00451"/>
    </source>
</evidence>
<organism>
    <name type="scientific">Herminiimonas arsenicoxydans</name>
    <dbReference type="NCBI Taxonomy" id="204773"/>
    <lineage>
        <taxon>Bacteria</taxon>
        <taxon>Pseudomonadati</taxon>
        <taxon>Pseudomonadota</taxon>
        <taxon>Betaproteobacteria</taxon>
        <taxon>Burkholderiales</taxon>
        <taxon>Oxalobacteraceae</taxon>
        <taxon>Herminiimonas</taxon>
    </lineage>
</organism>
<gene>
    <name evidence="1" type="primary">ndk</name>
    <name type="ordered locus">HEAR1260</name>
</gene>
<sequence>MAIERTLSIIKPDAVAKNVIGQIYSRFEGAGLKIIAARMAQLSRAEAEGFYAVHSARPFFKDLVDFMISGPVMIQVLEGENAIAKHRDLMGATDPKKAEKGTIRADFADSIDANAVHGSDAEETAKVEIAYYFPALNVYSR</sequence>
<protein>
    <recommendedName>
        <fullName evidence="1">Nucleoside diphosphate kinase</fullName>
        <shortName evidence="1">NDK</shortName>
        <shortName evidence="1">NDP kinase</shortName>
        <ecNumber evidence="1">2.7.4.6</ecNumber>
    </recommendedName>
    <alternativeName>
        <fullName evidence="1">Nucleoside-2-P kinase</fullName>
    </alternativeName>
</protein>
<feature type="chain" id="PRO_1000026240" description="Nucleoside diphosphate kinase">
    <location>
        <begin position="1"/>
        <end position="141"/>
    </location>
</feature>
<feature type="active site" description="Pros-phosphohistidine intermediate" evidence="1">
    <location>
        <position position="117"/>
    </location>
</feature>
<feature type="binding site" evidence="1">
    <location>
        <position position="11"/>
    </location>
    <ligand>
        <name>ATP</name>
        <dbReference type="ChEBI" id="CHEBI:30616"/>
    </ligand>
</feature>
<feature type="binding site" evidence="1">
    <location>
        <position position="59"/>
    </location>
    <ligand>
        <name>ATP</name>
        <dbReference type="ChEBI" id="CHEBI:30616"/>
    </ligand>
</feature>
<feature type="binding site" evidence="1">
    <location>
        <position position="87"/>
    </location>
    <ligand>
        <name>ATP</name>
        <dbReference type="ChEBI" id="CHEBI:30616"/>
    </ligand>
</feature>
<feature type="binding site" evidence="1">
    <location>
        <position position="93"/>
    </location>
    <ligand>
        <name>ATP</name>
        <dbReference type="ChEBI" id="CHEBI:30616"/>
    </ligand>
</feature>
<feature type="binding site" evidence="1">
    <location>
        <position position="104"/>
    </location>
    <ligand>
        <name>ATP</name>
        <dbReference type="ChEBI" id="CHEBI:30616"/>
    </ligand>
</feature>
<feature type="binding site" evidence="1">
    <location>
        <position position="114"/>
    </location>
    <ligand>
        <name>ATP</name>
        <dbReference type="ChEBI" id="CHEBI:30616"/>
    </ligand>
</feature>
<accession>A4G4J8</accession>
<comment type="function">
    <text evidence="1">Major role in the synthesis of nucleoside triphosphates other than ATP. The ATP gamma phosphate is transferred to the NDP beta phosphate via a ping-pong mechanism, using a phosphorylated active-site intermediate.</text>
</comment>
<comment type="catalytic activity">
    <reaction evidence="1">
        <text>a 2'-deoxyribonucleoside 5'-diphosphate + ATP = a 2'-deoxyribonucleoside 5'-triphosphate + ADP</text>
        <dbReference type="Rhea" id="RHEA:44640"/>
        <dbReference type="ChEBI" id="CHEBI:30616"/>
        <dbReference type="ChEBI" id="CHEBI:61560"/>
        <dbReference type="ChEBI" id="CHEBI:73316"/>
        <dbReference type="ChEBI" id="CHEBI:456216"/>
        <dbReference type="EC" id="2.7.4.6"/>
    </reaction>
</comment>
<comment type="catalytic activity">
    <reaction evidence="1">
        <text>a ribonucleoside 5'-diphosphate + ATP = a ribonucleoside 5'-triphosphate + ADP</text>
        <dbReference type="Rhea" id="RHEA:18113"/>
        <dbReference type="ChEBI" id="CHEBI:30616"/>
        <dbReference type="ChEBI" id="CHEBI:57930"/>
        <dbReference type="ChEBI" id="CHEBI:61557"/>
        <dbReference type="ChEBI" id="CHEBI:456216"/>
        <dbReference type="EC" id="2.7.4.6"/>
    </reaction>
</comment>
<comment type="cofactor">
    <cofactor evidence="1">
        <name>Mg(2+)</name>
        <dbReference type="ChEBI" id="CHEBI:18420"/>
    </cofactor>
</comment>
<comment type="subunit">
    <text evidence="1">Homotetramer.</text>
</comment>
<comment type="subcellular location">
    <subcellularLocation>
        <location evidence="1">Cytoplasm</location>
    </subcellularLocation>
</comment>
<comment type="similarity">
    <text evidence="1">Belongs to the NDK family.</text>
</comment>
<dbReference type="EC" id="2.7.4.6" evidence="1"/>
<dbReference type="EMBL" id="CU207211">
    <property type="protein sequence ID" value="CAL61435.1"/>
    <property type="molecule type" value="Genomic_DNA"/>
</dbReference>
<dbReference type="SMR" id="A4G4J8"/>
<dbReference type="STRING" id="204773.HEAR1260"/>
<dbReference type="KEGG" id="har:HEAR1260"/>
<dbReference type="eggNOG" id="COG0105">
    <property type="taxonomic scope" value="Bacteria"/>
</dbReference>
<dbReference type="HOGENOM" id="CLU_060216_8_1_4"/>
<dbReference type="OrthoDB" id="9801161at2"/>
<dbReference type="Proteomes" id="UP000006697">
    <property type="component" value="Chromosome"/>
</dbReference>
<dbReference type="GO" id="GO:0005737">
    <property type="term" value="C:cytoplasm"/>
    <property type="evidence" value="ECO:0007669"/>
    <property type="project" value="UniProtKB-SubCell"/>
</dbReference>
<dbReference type="GO" id="GO:0005524">
    <property type="term" value="F:ATP binding"/>
    <property type="evidence" value="ECO:0007669"/>
    <property type="project" value="UniProtKB-UniRule"/>
</dbReference>
<dbReference type="GO" id="GO:0046872">
    <property type="term" value="F:metal ion binding"/>
    <property type="evidence" value="ECO:0007669"/>
    <property type="project" value="UniProtKB-KW"/>
</dbReference>
<dbReference type="GO" id="GO:0004550">
    <property type="term" value="F:nucleoside diphosphate kinase activity"/>
    <property type="evidence" value="ECO:0007669"/>
    <property type="project" value="UniProtKB-UniRule"/>
</dbReference>
<dbReference type="GO" id="GO:0006241">
    <property type="term" value="P:CTP biosynthetic process"/>
    <property type="evidence" value="ECO:0007669"/>
    <property type="project" value="UniProtKB-UniRule"/>
</dbReference>
<dbReference type="GO" id="GO:0006183">
    <property type="term" value="P:GTP biosynthetic process"/>
    <property type="evidence" value="ECO:0007669"/>
    <property type="project" value="UniProtKB-UniRule"/>
</dbReference>
<dbReference type="GO" id="GO:0006228">
    <property type="term" value="P:UTP biosynthetic process"/>
    <property type="evidence" value="ECO:0007669"/>
    <property type="project" value="UniProtKB-UniRule"/>
</dbReference>
<dbReference type="CDD" id="cd04413">
    <property type="entry name" value="NDPk_I"/>
    <property type="match status" value="1"/>
</dbReference>
<dbReference type="FunFam" id="3.30.70.141:FF:000001">
    <property type="entry name" value="Nucleoside diphosphate kinase"/>
    <property type="match status" value="1"/>
</dbReference>
<dbReference type="Gene3D" id="3.30.70.141">
    <property type="entry name" value="Nucleoside diphosphate kinase-like domain"/>
    <property type="match status" value="1"/>
</dbReference>
<dbReference type="HAMAP" id="MF_00451">
    <property type="entry name" value="NDP_kinase"/>
    <property type="match status" value="1"/>
</dbReference>
<dbReference type="InterPro" id="IPR034907">
    <property type="entry name" value="NDK-like_dom"/>
</dbReference>
<dbReference type="InterPro" id="IPR036850">
    <property type="entry name" value="NDK-like_dom_sf"/>
</dbReference>
<dbReference type="InterPro" id="IPR001564">
    <property type="entry name" value="Nucleoside_diP_kinase"/>
</dbReference>
<dbReference type="InterPro" id="IPR023005">
    <property type="entry name" value="Nucleoside_diP_kinase_AS"/>
</dbReference>
<dbReference type="NCBIfam" id="NF001908">
    <property type="entry name" value="PRK00668.1"/>
    <property type="match status" value="1"/>
</dbReference>
<dbReference type="PANTHER" id="PTHR46161">
    <property type="entry name" value="NUCLEOSIDE DIPHOSPHATE KINASE"/>
    <property type="match status" value="1"/>
</dbReference>
<dbReference type="PANTHER" id="PTHR46161:SF3">
    <property type="entry name" value="NUCLEOSIDE DIPHOSPHATE KINASE DDB_G0292928-RELATED"/>
    <property type="match status" value="1"/>
</dbReference>
<dbReference type="Pfam" id="PF00334">
    <property type="entry name" value="NDK"/>
    <property type="match status" value="1"/>
</dbReference>
<dbReference type="PRINTS" id="PR01243">
    <property type="entry name" value="NUCDPKINASE"/>
</dbReference>
<dbReference type="SMART" id="SM00562">
    <property type="entry name" value="NDK"/>
    <property type="match status" value="1"/>
</dbReference>
<dbReference type="SUPFAM" id="SSF54919">
    <property type="entry name" value="Nucleoside diphosphate kinase, NDK"/>
    <property type="match status" value="1"/>
</dbReference>
<dbReference type="PROSITE" id="PS00469">
    <property type="entry name" value="NDPK"/>
    <property type="match status" value="1"/>
</dbReference>
<dbReference type="PROSITE" id="PS51374">
    <property type="entry name" value="NDPK_LIKE"/>
    <property type="match status" value="1"/>
</dbReference>
<reference key="1">
    <citation type="journal article" date="2007" name="PLoS Genet.">
        <title>A tale of two oxidation states: bacterial colonization of arsenic-rich environments.</title>
        <authorList>
            <person name="Muller D."/>
            <person name="Medigue C."/>
            <person name="Koechler S."/>
            <person name="Barbe V."/>
            <person name="Barakat M."/>
            <person name="Talla E."/>
            <person name="Bonnefoy V."/>
            <person name="Krin E."/>
            <person name="Arsene-Ploetze F."/>
            <person name="Carapito C."/>
            <person name="Chandler M."/>
            <person name="Cournoyer B."/>
            <person name="Cruveiller S."/>
            <person name="Dossat C."/>
            <person name="Duval S."/>
            <person name="Heymann M."/>
            <person name="Leize E."/>
            <person name="Lieutaud A."/>
            <person name="Lievremont D."/>
            <person name="Makita Y."/>
            <person name="Mangenot S."/>
            <person name="Nitschke W."/>
            <person name="Ortet P."/>
            <person name="Perdrial N."/>
            <person name="Schoepp B."/>
            <person name="Siguier P."/>
            <person name="Simeonova D.D."/>
            <person name="Rouy Z."/>
            <person name="Segurens B."/>
            <person name="Turlin E."/>
            <person name="Vallenet D."/>
            <person name="van Dorsselaer A."/>
            <person name="Weiss S."/>
            <person name="Weissenbach J."/>
            <person name="Lett M.-C."/>
            <person name="Danchin A."/>
            <person name="Bertin P.N."/>
        </authorList>
    </citation>
    <scope>NUCLEOTIDE SEQUENCE [LARGE SCALE GENOMIC DNA]</scope>
    <source>
        <strain>ULPAs1</strain>
    </source>
</reference>
<name>NDK_HERAR</name>
<keyword id="KW-0067">ATP-binding</keyword>
<keyword id="KW-0963">Cytoplasm</keyword>
<keyword id="KW-0418">Kinase</keyword>
<keyword id="KW-0460">Magnesium</keyword>
<keyword id="KW-0479">Metal-binding</keyword>
<keyword id="KW-0546">Nucleotide metabolism</keyword>
<keyword id="KW-0547">Nucleotide-binding</keyword>
<keyword id="KW-0597">Phosphoprotein</keyword>
<keyword id="KW-1185">Reference proteome</keyword>
<keyword id="KW-0808">Transferase</keyword>
<proteinExistence type="inferred from homology"/>